<comment type="function">
    <text evidence="3">Regulates microtubule dynamics during mitosis by stimulating kif2c. Probably recognizes and binds to some phosphorylated proteins and promotes their ubiquitination and degradation.</text>
</comment>
<comment type="subunit">
    <text evidence="3 5">Homodimer (Probable). Binds microtubules. Interacts with kif2c, aurkb, incenp and SKP1. Probably part of a SCF (SKP1-CUL1-F-box) protein ligase complex.</text>
</comment>
<comment type="subcellular location">
    <subcellularLocation>
        <location evidence="3">Nucleus</location>
    </subcellularLocation>
    <subcellularLocation>
        <location evidence="3">Cytoplasm</location>
        <location evidence="3">Cytoskeleton</location>
    </subcellularLocation>
    <subcellularLocation>
        <location evidence="3">Chromosome</location>
    </subcellularLocation>
    <subcellularLocation>
        <location evidence="3">Midbody</location>
    </subcellularLocation>
    <text>Chromosomal until metaphase. Located at the midbody during telophase.</text>
</comment>
<comment type="alternative products">
    <event type="alternative splicing"/>
    <isoform>
        <id>Q7SZL5-1</id>
        <name>1</name>
        <sequence type="displayed"/>
    </isoform>
    <isoform>
        <id>Q7SZL5-2</id>
        <name>2</name>
        <sequence type="described" ref="VSP_028286"/>
    </isoform>
</comment>
<comment type="tissue specificity">
    <text evidence="3">Present in egg (at protein level).</text>
</comment>
<comment type="similarity">
    <text evidence="5">Belongs to the MTUS1 family.</text>
</comment>
<comment type="sequence caution" evidence="5">
    <conflict type="miscellaneous discrepancy">
        <sequence resource="EMBL-CDS" id="AAF14556"/>
    </conflict>
    <text>Contaminating sequence. Potential poly-A sequence.</text>
</comment>
<organism>
    <name type="scientific">Xenopus laevis</name>
    <name type="common">African clawed frog</name>
    <dbReference type="NCBI Taxonomy" id="8355"/>
    <lineage>
        <taxon>Eukaryota</taxon>
        <taxon>Metazoa</taxon>
        <taxon>Chordata</taxon>
        <taxon>Craniata</taxon>
        <taxon>Vertebrata</taxon>
        <taxon>Euteleostomi</taxon>
        <taxon>Amphibia</taxon>
        <taxon>Batrachia</taxon>
        <taxon>Anura</taxon>
        <taxon>Pipoidea</taxon>
        <taxon>Pipidae</taxon>
        <taxon>Xenopodinae</taxon>
        <taxon>Xenopus</taxon>
        <taxon>Xenopus</taxon>
    </lineage>
</organism>
<proteinExistence type="evidence at protein level"/>
<reference key="1">
    <citation type="journal article" date="2003" name="Dev. Cell">
        <title>An inner centromere protein that stimulates the microtubule depolymerizing activity of a KinI kinesin.</title>
        <authorList>
            <person name="Ohi R."/>
            <person name="Coughlin M.L."/>
            <person name="Lane W.S."/>
            <person name="Mitchison T.J."/>
        </authorList>
    </citation>
    <scope>NUCLEOTIDE SEQUENCE [MRNA] (ISOFORM 1)</scope>
    <scope>IDENTIFICATION BY MASS SPECTROMETRY</scope>
    <scope>SUBUNIT</scope>
    <scope>INTERACTION WITH KIF2C; AURKB; INCENP AND SKP1</scope>
    <scope>TISSUE SPECIFICITY</scope>
    <scope>FUNCTION</scope>
    <scope>SUBCELLULAR LOCATION</scope>
</reference>
<reference key="2">
    <citation type="journal article" date="1999" name="Curr. Biol.">
        <title>Identification of novel F-box proteins in Xenopus laevis.</title>
        <authorList>
            <person name="Regan-Reimann J.D."/>
            <person name="Duong Q.V."/>
            <person name="Jackson P.K."/>
        </authorList>
    </citation>
    <scope>NUCLEOTIDE SEQUENCE [MRNA] OF 672-1140 (ISOFORM 2)</scope>
    <scope>POSSIBLE INTERACTION WITH SKP1</scope>
    <source>
        <tissue>Oocyte</tissue>
    </source>
</reference>
<sequence>MSVQTATTENRFQSTLDDNNGNNSESKNIARCPKYEWNANVNDQGPGVIDHSILDQQSDNEINKHYLLQSPNALELDSTLDYIGNAAGHCDTFNLKADKGCKTVNSSLLHENPGEEDETVDYINNELCNKMQDTLCPPSIPIQTSASDEIHKGLGAITDRGSAYNKIAEQSLCVQESTDYLCKMEPKWTVQAFFGDADKLCRNEANNLVDISTTDHKYDHNSSFGIFTLSLDFSDEKCMREDSLVLSGSEKPLSASILEGSALPNSSIDVFTGSVKKTDNIDGFCQGAELSLRDLDYLEVPHQKDSTETPQSKLSLTSEHSVFTSETSEVMLEVDARRVMDKTVESHLPNLRLSSNVGKEDSAPGASLEEFVSGSVPAVAPEELASNLIKDKNTIKNKESHGEAHSLESPARPDSSSSELKDLLSNLSGQNCEDTFIISSPNSGIGSKAFTSTPLPESKNMTFSVPVLESITENNELQQNLDAIKYDLEGLRHSSDSNIVTKPTNKKPAVGSVVGKAKKNEVISFPKPSFKNVKAKVLTRPSLQAKDSNPYASKTSPRSPPSLSNASSPAQSPRPLSSAVKTVQKRSVINQDMKTEAAIAKSQKQPITKQLFPTHSAHVPTHSKHALGKVPRAAALKHTQNETERASSSNSTRSSGSAAAALTCTAGSRVTENKSEKAKTSAKPSAPNVRLMGPNKIEQKGIIQPHFDKAQSLKEAKEGTVSADMDILANIVPLPTKLAIPSSRNLHKELILGIKNVASQPAKGRVQTTVQRRGSLGKNILTIRVSSPPREKPQVTVEGGLNSPKGRPISVKASAANGTGSLPRTRLPCRGTTLQRTASVSSVCSTQSELSNLSTRSTTTTSSIKTEDIPTAKCIRPNSASGALTAKSSIPRGRSQSLKVTQTVTGTKKSPSIIPTLPRSSGPALSLTKKLEARSLQNVEKNKQKTSPRGPVTQAQTPPVDPKSIELTKCKAACEQQRGVIENLKNLLSSSNQRFEALTVVVQQLINQREETLKKRKALSQELLNLRGDLVCASSTCERLEKEKNELLKAYEGILQKVKEEHHAELSDLEEKLKQFYTGECEKLQSIFIEEAEKYKNELQEKVDDLNTTHEAYRLQAETSQIETIHTLKEDYEKSLTELKDAKDKENKILEDSFKEKQAEVEKKILELKDVNESLKEKLKYEEEQRKLTKEKSVQKNPQVMYLEQELESLKAVLEIKNEKLHQQDKKLMQVEKLVETNTTLVERLNKCQQENEDLKARMVNHVALSRQLSTEQEVLQRSLEKESKANKRLSMENEELLWKLHNGDLCSPKKLSPSSPGIPFHPSRNSGSFSSPTVSPR</sequence>
<accession>Q7SZL5</accession>
<accession>Q9PTL6</accession>
<dbReference type="EMBL" id="AY352638">
    <property type="protein sequence ID" value="AAQ22723.1"/>
    <property type="molecule type" value="mRNA"/>
</dbReference>
<dbReference type="EMBL" id="AF176665">
    <property type="protein sequence ID" value="AAF14556.1"/>
    <property type="status" value="ALT_SEQ"/>
    <property type="molecule type" value="mRNA"/>
</dbReference>
<dbReference type="RefSeq" id="NP_001082742.1">
    <molecule id="Q7SZL5-1"/>
    <property type="nucleotide sequence ID" value="NM_001089273.1"/>
</dbReference>
<dbReference type="SMR" id="Q7SZL5"/>
<dbReference type="IntAct" id="Q7SZL5">
    <property type="interactions" value="1"/>
</dbReference>
<dbReference type="GeneID" id="398697"/>
<dbReference type="KEGG" id="xla:398697"/>
<dbReference type="AGR" id="Xenbase:XB-GENE-979441"/>
<dbReference type="CTD" id="398697"/>
<dbReference type="Xenbase" id="XB-GENE-979441">
    <property type="gene designation" value="mtus1.L"/>
</dbReference>
<dbReference type="OrthoDB" id="10038993at2759"/>
<dbReference type="Proteomes" id="UP000186698">
    <property type="component" value="Chromosome 1L"/>
</dbReference>
<dbReference type="Bgee" id="398697">
    <property type="expression patterns" value="Expressed in heart and 19 other cell types or tissues"/>
</dbReference>
<dbReference type="GO" id="GO:0005694">
    <property type="term" value="C:chromosome"/>
    <property type="evidence" value="ECO:0007669"/>
    <property type="project" value="UniProtKB-SubCell"/>
</dbReference>
<dbReference type="GO" id="GO:0005737">
    <property type="term" value="C:cytoplasm"/>
    <property type="evidence" value="ECO:0007669"/>
    <property type="project" value="UniProtKB-KW"/>
</dbReference>
<dbReference type="GO" id="GO:0005874">
    <property type="term" value="C:microtubule"/>
    <property type="evidence" value="ECO:0007669"/>
    <property type="project" value="UniProtKB-KW"/>
</dbReference>
<dbReference type="GO" id="GO:0030496">
    <property type="term" value="C:midbody"/>
    <property type="evidence" value="ECO:0007669"/>
    <property type="project" value="UniProtKB-SubCell"/>
</dbReference>
<dbReference type="GO" id="GO:0005634">
    <property type="term" value="C:nucleus"/>
    <property type="evidence" value="ECO:0000318"/>
    <property type="project" value="GO_Central"/>
</dbReference>
<dbReference type="GO" id="GO:0008017">
    <property type="term" value="F:microtubule binding"/>
    <property type="evidence" value="ECO:0000318"/>
    <property type="project" value="GO_Central"/>
</dbReference>
<dbReference type="GO" id="GO:0019901">
    <property type="term" value="F:protein kinase binding"/>
    <property type="evidence" value="ECO:0000353"/>
    <property type="project" value="UniProtKB"/>
</dbReference>
<dbReference type="GO" id="GO:0010758">
    <property type="term" value="P:regulation of macrophage chemotaxis"/>
    <property type="evidence" value="ECO:0000318"/>
    <property type="project" value="GO_Central"/>
</dbReference>
<dbReference type="InterPro" id="IPR051293">
    <property type="entry name" value="MTUS1/CCDC69"/>
</dbReference>
<dbReference type="PANTHER" id="PTHR24200:SF7">
    <property type="entry name" value="MICROTUBULE-ASSOCIATED TUMOR SUPPRESSOR 1"/>
    <property type="match status" value="1"/>
</dbReference>
<dbReference type="PANTHER" id="PTHR24200">
    <property type="entry name" value="TOUCAN, ISOFORM A"/>
    <property type="match status" value="1"/>
</dbReference>
<name>MTUS1_XENLA</name>
<protein>
    <recommendedName>
        <fullName>Microtubule-associated tumor suppressor 1 homolog</fullName>
    </recommendedName>
    <alternativeName>
        <fullName>F-box protein 27</fullName>
    </alternativeName>
    <alternativeName>
        <fullName>Inner centromere KinI stimulator</fullName>
    </alternativeName>
    <alternativeName>
        <fullName>Mitochondrial tumor suppressor 1 homolog</fullName>
    </alternativeName>
</protein>
<evidence type="ECO:0000255" key="1"/>
<evidence type="ECO:0000256" key="2">
    <source>
        <dbReference type="SAM" id="MobiDB-lite"/>
    </source>
</evidence>
<evidence type="ECO:0000269" key="3">
    <source>
    </source>
</evidence>
<evidence type="ECO:0000303" key="4">
    <source>
    </source>
</evidence>
<evidence type="ECO:0000305" key="5"/>
<feature type="chain" id="PRO_0000305202" description="Microtubule-associated tumor suppressor 1 homolog">
    <location>
        <begin position="1"/>
        <end position="1338"/>
    </location>
</feature>
<feature type="domain" description="F-box">
    <location>
        <begin position="731"/>
        <end position="774"/>
    </location>
</feature>
<feature type="region of interest" description="Disordered" evidence="2">
    <location>
        <begin position="1"/>
        <end position="28"/>
    </location>
</feature>
<feature type="region of interest" description="Disordered" evidence="2">
    <location>
        <begin position="399"/>
        <end position="421"/>
    </location>
</feature>
<feature type="region of interest" description="Disordered" evidence="2">
    <location>
        <begin position="536"/>
        <end position="585"/>
    </location>
</feature>
<feature type="region of interest" description="Disordered" evidence="2">
    <location>
        <begin position="636"/>
        <end position="695"/>
    </location>
</feature>
<feature type="region of interest" description="Disordered" evidence="2">
    <location>
        <begin position="788"/>
        <end position="808"/>
    </location>
</feature>
<feature type="region of interest" description="Disordered" evidence="2">
    <location>
        <begin position="883"/>
        <end position="925"/>
    </location>
</feature>
<feature type="region of interest" description="Disordered" evidence="2">
    <location>
        <begin position="938"/>
        <end position="962"/>
    </location>
</feature>
<feature type="region of interest" description="Disordered" evidence="2">
    <location>
        <begin position="1309"/>
        <end position="1338"/>
    </location>
</feature>
<feature type="coiled-coil region" evidence="1">
    <location>
        <begin position="469"/>
        <end position="494"/>
    </location>
</feature>
<feature type="coiled-coil region" evidence="1">
    <location>
        <begin position="966"/>
        <end position="1298"/>
    </location>
</feature>
<feature type="compositionally biased region" description="Polar residues" evidence="2">
    <location>
        <begin position="1"/>
        <end position="27"/>
    </location>
</feature>
<feature type="compositionally biased region" description="Polar residues" evidence="2">
    <location>
        <begin position="541"/>
        <end position="555"/>
    </location>
</feature>
<feature type="compositionally biased region" description="Low complexity" evidence="2">
    <location>
        <begin position="561"/>
        <end position="573"/>
    </location>
</feature>
<feature type="compositionally biased region" description="Low complexity" evidence="2">
    <location>
        <begin position="646"/>
        <end position="661"/>
    </location>
</feature>
<feature type="compositionally biased region" description="Polar residues" evidence="2">
    <location>
        <begin position="883"/>
        <end position="910"/>
    </location>
</feature>
<feature type="compositionally biased region" description="Polar residues" evidence="2">
    <location>
        <begin position="1324"/>
        <end position="1338"/>
    </location>
</feature>
<feature type="splice variant" id="VSP_028286" description="In isoform 2." evidence="4">
    <location>
        <begin position="798"/>
        <end position="938"/>
    </location>
</feature>
<gene>
    <name type="primary">mtus1</name>
    <name type="synonym">fbx27</name>
    <name type="synonym">icis</name>
</gene>
<keyword id="KW-0025">Alternative splicing</keyword>
<keyword id="KW-0131">Cell cycle</keyword>
<keyword id="KW-0158">Chromosome</keyword>
<keyword id="KW-0175">Coiled coil</keyword>
<keyword id="KW-0963">Cytoplasm</keyword>
<keyword id="KW-0206">Cytoskeleton</keyword>
<keyword id="KW-0493">Microtubule</keyword>
<keyword id="KW-0539">Nucleus</keyword>
<keyword id="KW-1185">Reference proteome</keyword>
<keyword id="KW-0833">Ubl conjugation pathway</keyword>